<organism>
    <name type="scientific">Mycobacterium tuberculosis (strain ATCC 25618 / H37Rv)</name>
    <dbReference type="NCBI Taxonomy" id="83332"/>
    <lineage>
        <taxon>Bacteria</taxon>
        <taxon>Bacillati</taxon>
        <taxon>Actinomycetota</taxon>
        <taxon>Actinomycetes</taxon>
        <taxon>Mycobacteriales</taxon>
        <taxon>Mycobacteriaceae</taxon>
        <taxon>Mycobacterium</taxon>
        <taxon>Mycobacterium tuberculosis complex</taxon>
    </lineage>
</organism>
<name>EXRBN_MYCTU</name>
<keyword id="KW-0002">3D-structure</keyword>
<keyword id="KW-0269">Exonuclease</keyword>
<keyword id="KW-0378">Hydrolase</keyword>
<keyword id="KW-0460">Magnesium</keyword>
<keyword id="KW-0479">Metal-binding</keyword>
<keyword id="KW-0540">Nuclease</keyword>
<keyword id="KW-1185">Reference proteome</keyword>
<sequence length="168" mass="19520">MRYFYDTEFIEDGHTIELISIGVVAEDGREYYAVSTEFDPERAGSWVRTHVLPKLPPPASQLWRSRQQIRLDLEEFLRIDGTDSIELWAWVGAYDHVALCQLWGPMTALPPTVPRFTRELRQLWEDRGCPRMPPRPRDVHDALVDARDQLRRFRLITSTDDAGRGAAR</sequence>
<gene>
    <name type="ordered locus">Rv2179c</name>
    <name type="ordered locus">RVBD_2179c</name>
</gene>
<dbReference type="EC" id="3.1.13.-" evidence="1"/>
<dbReference type="EMBL" id="AL123456">
    <property type="protein sequence ID" value="CCP44956.1"/>
    <property type="molecule type" value="Genomic_DNA"/>
</dbReference>
<dbReference type="EMBL" id="CP003248">
    <property type="protein sequence ID" value="AFN50127.1"/>
    <property type="molecule type" value="Genomic_DNA"/>
</dbReference>
<dbReference type="PIR" id="E70936">
    <property type="entry name" value="E70936"/>
</dbReference>
<dbReference type="RefSeq" id="NP_216695.1">
    <property type="nucleotide sequence ID" value="NC_000962.3"/>
</dbReference>
<dbReference type="RefSeq" id="WP_003411331.1">
    <property type="nucleotide sequence ID" value="NZ_NVQJ01000008.1"/>
</dbReference>
<dbReference type="PDB" id="4HEC">
    <property type="method" value="X-ray"/>
    <property type="resolution" value="1.80 A"/>
    <property type="chains" value="A/B=2-168"/>
</dbReference>
<dbReference type="PDB" id="4HVJ">
    <property type="method" value="X-ray"/>
    <property type="resolution" value="2.10 A"/>
    <property type="chains" value="A/B=2-168"/>
</dbReference>
<dbReference type="PDB" id="6S0M">
    <property type="method" value="X-ray"/>
    <property type="resolution" value="2.00 A"/>
    <property type="chains" value="A/B=1-168"/>
</dbReference>
<dbReference type="PDBsum" id="4HEC"/>
<dbReference type="PDBsum" id="4HVJ"/>
<dbReference type="PDBsum" id="6S0M"/>
<dbReference type="SMR" id="P9WJ73"/>
<dbReference type="STRING" id="83332.Rv2179c"/>
<dbReference type="PaxDb" id="83332-Rv2179c"/>
<dbReference type="GeneID" id="887927"/>
<dbReference type="KEGG" id="mtu:Rv2179c"/>
<dbReference type="KEGG" id="mtv:RVBD_2179c"/>
<dbReference type="TubercuList" id="Rv2179c"/>
<dbReference type="eggNOG" id="ENOG5032SJD">
    <property type="taxonomic scope" value="Bacteria"/>
</dbReference>
<dbReference type="InParanoid" id="P9WJ73"/>
<dbReference type="OrthoDB" id="4640719at2"/>
<dbReference type="PhylomeDB" id="P9WJ73"/>
<dbReference type="EvolutionaryTrace" id="P9WJ73"/>
<dbReference type="Proteomes" id="UP000001584">
    <property type="component" value="Chromosome"/>
</dbReference>
<dbReference type="GO" id="GO:0008408">
    <property type="term" value="F:3'-5' exonuclease activity"/>
    <property type="evidence" value="ECO:0007669"/>
    <property type="project" value="InterPro"/>
</dbReference>
<dbReference type="GO" id="GO:0042802">
    <property type="term" value="F:identical protein binding"/>
    <property type="evidence" value="ECO:0000353"/>
    <property type="project" value="IntAct"/>
</dbReference>
<dbReference type="GO" id="GO:0000287">
    <property type="term" value="F:magnesium ion binding"/>
    <property type="evidence" value="ECO:0007669"/>
    <property type="project" value="UniProtKB-UniRule"/>
</dbReference>
<dbReference type="GO" id="GO:0003676">
    <property type="term" value="F:nucleic acid binding"/>
    <property type="evidence" value="ECO:0007669"/>
    <property type="project" value="InterPro"/>
</dbReference>
<dbReference type="GO" id="GO:0004532">
    <property type="term" value="F:RNA exonuclease activity"/>
    <property type="evidence" value="ECO:0007669"/>
    <property type="project" value="UniProtKB-UniRule"/>
</dbReference>
<dbReference type="Gene3D" id="3.30.420.10">
    <property type="entry name" value="Ribonuclease H-like superfamily/Ribonuclease H"/>
    <property type="match status" value="1"/>
</dbReference>
<dbReference type="HAMAP" id="MF_00977">
    <property type="entry name" value="3_5_Exoribonuc_actinobact"/>
    <property type="match status" value="1"/>
</dbReference>
<dbReference type="InterPro" id="IPR030853">
    <property type="entry name" value="3_5_Exoribonuc_actinobac"/>
</dbReference>
<dbReference type="InterPro" id="IPR012337">
    <property type="entry name" value="RNaseH-like_sf"/>
</dbReference>
<dbReference type="InterPro" id="IPR036397">
    <property type="entry name" value="RNaseH_sf"/>
</dbReference>
<dbReference type="InterPro" id="IPR033390">
    <property type="entry name" value="Rv2179c-like"/>
</dbReference>
<dbReference type="NCBIfam" id="NF033638">
    <property type="entry name" value="RNase_AS"/>
    <property type="match status" value="1"/>
</dbReference>
<dbReference type="Pfam" id="PF16473">
    <property type="entry name" value="Rv2179c-like"/>
    <property type="match status" value="1"/>
</dbReference>
<dbReference type="SUPFAM" id="SSF53098">
    <property type="entry name" value="Ribonuclease H-like"/>
    <property type="match status" value="1"/>
</dbReference>
<accession>P9WJ73</accession>
<accession>F2GJZ2</accession>
<accession>I6Y8M5</accession>
<accession>L7N5T0</accession>
<accession>O53513</accession>
<accession>Q7D7E6</accession>
<evidence type="ECO:0000255" key="1">
    <source>
        <dbReference type="HAMAP-Rule" id="MF_00977"/>
    </source>
</evidence>
<evidence type="ECO:0000269" key="2">
    <source>
    </source>
</evidence>
<evidence type="ECO:0000305" key="3">
    <source>
    </source>
</evidence>
<evidence type="ECO:0007829" key="4">
    <source>
        <dbReference type="PDB" id="4HEC"/>
    </source>
</evidence>
<evidence type="ECO:0007829" key="5">
    <source>
        <dbReference type="PDB" id="6S0M"/>
    </source>
</evidence>
<protein>
    <recommendedName>
        <fullName evidence="1">3'-5' exoribonuclease Rv2179c</fullName>
        <ecNumber evidence="1">3.1.13.-</ecNumber>
    </recommendedName>
</protein>
<reference key="1">
    <citation type="journal article" date="1998" name="Nature">
        <title>Deciphering the biology of Mycobacterium tuberculosis from the complete genome sequence.</title>
        <authorList>
            <person name="Cole S.T."/>
            <person name="Brosch R."/>
            <person name="Parkhill J."/>
            <person name="Garnier T."/>
            <person name="Churcher C.M."/>
            <person name="Harris D.E."/>
            <person name="Gordon S.V."/>
            <person name="Eiglmeier K."/>
            <person name="Gas S."/>
            <person name="Barry C.E. III"/>
            <person name="Tekaia F."/>
            <person name="Badcock K."/>
            <person name="Basham D."/>
            <person name="Brown D."/>
            <person name="Chillingworth T."/>
            <person name="Connor R."/>
            <person name="Davies R.M."/>
            <person name="Devlin K."/>
            <person name="Feltwell T."/>
            <person name="Gentles S."/>
            <person name="Hamlin N."/>
            <person name="Holroyd S."/>
            <person name="Hornsby T."/>
            <person name="Jagels K."/>
            <person name="Krogh A."/>
            <person name="McLean J."/>
            <person name="Moule S."/>
            <person name="Murphy L.D."/>
            <person name="Oliver S."/>
            <person name="Osborne J."/>
            <person name="Quail M.A."/>
            <person name="Rajandream M.A."/>
            <person name="Rogers J."/>
            <person name="Rutter S."/>
            <person name="Seeger K."/>
            <person name="Skelton S."/>
            <person name="Squares S."/>
            <person name="Squares R."/>
            <person name="Sulston J.E."/>
            <person name="Taylor K."/>
            <person name="Whitehead S."/>
            <person name="Barrell B.G."/>
        </authorList>
    </citation>
    <scope>NUCLEOTIDE SEQUENCE [LARGE SCALE GENOMIC DNA]</scope>
    <source>
        <strain>ATCC 25618 / H37Rv</strain>
    </source>
</reference>
<reference key="2">
    <citation type="submission" date="2013-11" db="EMBL/GenBank/DDBJ databases">
        <title>The genome sequence of Mycobacterium tuberculosis H37Rv.</title>
        <authorList>
            <consortium name="The Broad Institute Genome Sequencing Platform"/>
            <person name="Galagan J."/>
            <person name="Kreiswirth B."/>
            <person name="Dobos K."/>
            <person name="Fortune S."/>
            <person name="Fitzgerald M."/>
            <person name="Young S.K."/>
            <person name="Zeng Q."/>
            <person name="Gargeya S."/>
            <person name="Abouelleil A."/>
            <person name="Alvarado L."/>
            <person name="Berlin A.M."/>
            <person name="Chapman S.B."/>
            <person name="Gainer-Dewar J."/>
            <person name="Goldberg J."/>
            <person name="Gnerre S."/>
            <person name="Griggs A."/>
            <person name="Gujja S."/>
            <person name="Hansen M."/>
            <person name="Howarth C."/>
            <person name="Imamovic A."/>
            <person name="Larimer J."/>
            <person name="McCowan C."/>
            <person name="Murphy C."/>
            <person name="Pearson M."/>
            <person name="Poon T."/>
            <person name="Priest M."/>
            <person name="Roberts A."/>
            <person name="Saif S."/>
            <person name="Shea T."/>
            <person name="Sykes S."/>
            <person name="Wortman J."/>
            <person name="Nusbaum C."/>
            <person name="Birren B."/>
        </authorList>
    </citation>
    <scope>NUCLEOTIDE SEQUENCE [LARGE SCALE GENOMIC DNA]</scope>
    <source>
        <strain>ATCC 25618 / H37Rv</strain>
    </source>
</reference>
<reference key="3">
    <citation type="journal article" date="2011" name="Mol. Cell. Proteomics">
        <title>Proteogenomic analysis of Mycobacterium tuberculosis by high resolution mass spectrometry.</title>
        <authorList>
            <person name="Kelkar D.S."/>
            <person name="Kumar D."/>
            <person name="Kumar P."/>
            <person name="Balakrishnan L."/>
            <person name="Muthusamy B."/>
            <person name="Yadav A.K."/>
            <person name="Shrivastava P."/>
            <person name="Marimuthu A."/>
            <person name="Anand S."/>
            <person name="Sundaram H."/>
            <person name="Kingsbury R."/>
            <person name="Harsha H.C."/>
            <person name="Nair B."/>
            <person name="Prasad T.S."/>
            <person name="Chauhan D.S."/>
            <person name="Katoch K."/>
            <person name="Katoch V.M."/>
            <person name="Kumar P."/>
            <person name="Chaerkady R."/>
            <person name="Ramachandran S."/>
            <person name="Dash D."/>
            <person name="Pandey A."/>
        </authorList>
    </citation>
    <scope>IDENTIFICATION BY MASS SPECTROMETRY [LARGE SCALE ANALYSIS]</scope>
    <source>
        <strain>ATCC 25618 / H37Rv</strain>
    </source>
</reference>
<reference key="4">
    <citation type="journal article" date="2014" name="J. Biol. Chem.">
        <title>Mycobacterium tuberculosis Rv2179c establishes a new exoribonuclease family with broad phylogenetic distribution.</title>
        <authorList>
            <person name="Abendroth J."/>
            <person name="Ollodart A."/>
            <person name="Andrews E.S."/>
            <person name="Myler P.J."/>
            <person name="Staker B.L."/>
            <person name="Edwards T.E."/>
            <person name="Arcus V.L."/>
            <person name="Grundner C."/>
        </authorList>
    </citation>
    <scope>X-RAY CRYSTALLOGRAPHY (2.10 ANGSTROMS) IN COMPLEX WITH AMP AND MAGNESIUM IONS</scope>
    <scope>FUNCTION</scope>
    <scope>COFACTOR</scope>
    <scope>ACTIVITY REGULATION</scope>
    <scope>MUTAGENESIS OF ASP-145</scope>
    <scope>SUBUNIT</scope>
</reference>
<feature type="chain" id="PRO_0000424958" description="3'-5' exoribonuclease Rv2179c">
    <location>
        <begin position="1"/>
        <end position="168"/>
    </location>
</feature>
<feature type="region of interest" description="RNA binding" evidence="3">
    <location>
        <begin position="6"/>
        <end position="9"/>
    </location>
</feature>
<feature type="binding site" evidence="2">
    <location>
        <position position="6"/>
    </location>
    <ligand>
        <name>Mg(2+)</name>
        <dbReference type="ChEBI" id="CHEBI:18420"/>
        <note>catalytic</note>
    </ligand>
</feature>
<feature type="mutagenesis site" description="Strongly reduces enzyme activity." evidence="2">
    <original>D</original>
    <variation>A</variation>
    <location>
        <position position="145"/>
    </location>
</feature>
<feature type="strand" evidence="4">
    <location>
        <begin position="2"/>
        <end position="11"/>
    </location>
</feature>
<feature type="strand" evidence="4">
    <location>
        <begin position="16"/>
        <end position="25"/>
    </location>
</feature>
<feature type="strand" evidence="4">
    <location>
        <begin position="30"/>
        <end position="35"/>
    </location>
</feature>
<feature type="helix" evidence="4">
    <location>
        <begin position="40"/>
        <end position="42"/>
    </location>
</feature>
<feature type="helix" evidence="4">
    <location>
        <begin position="45"/>
        <end position="50"/>
    </location>
</feature>
<feature type="helix" evidence="4">
    <location>
        <begin position="52"/>
        <end position="54"/>
    </location>
</feature>
<feature type="helix" evidence="4">
    <location>
        <begin position="66"/>
        <end position="76"/>
    </location>
</feature>
<feature type="turn" evidence="4">
    <location>
        <begin position="77"/>
        <end position="80"/>
    </location>
</feature>
<feature type="strand" evidence="5">
    <location>
        <begin position="81"/>
        <end position="83"/>
    </location>
</feature>
<feature type="strand" evidence="4">
    <location>
        <begin position="84"/>
        <end position="91"/>
    </location>
</feature>
<feature type="helix" evidence="4">
    <location>
        <begin position="93"/>
        <end position="100"/>
    </location>
</feature>
<feature type="turn" evidence="4">
    <location>
        <begin position="101"/>
        <end position="103"/>
    </location>
</feature>
<feature type="helix" evidence="4">
    <location>
        <begin position="106"/>
        <end position="108"/>
    </location>
</feature>
<feature type="helix" evidence="4">
    <location>
        <begin position="120"/>
        <end position="126"/>
    </location>
</feature>
<feature type="turn" evidence="4">
    <location>
        <begin position="137"/>
        <end position="139"/>
    </location>
</feature>
<feature type="helix" evidence="4">
    <location>
        <begin position="142"/>
        <end position="157"/>
    </location>
</feature>
<comment type="function">
    <text evidence="1 2">Exonuclease that cleaves single-stranded 3' overhangs of double-stranded RNA. Has no activity with 5' overhangs. Has negligible endonuclease activity. Can bind ATP, dATP and AMP (in vitro); the nucleotide occupies the predicted substrate binding site.</text>
</comment>
<comment type="cofactor">
    <cofactor evidence="1 2">
        <name>Mg(2+)</name>
        <dbReference type="ChEBI" id="CHEBI:18420"/>
    </cofactor>
    <text evidence="1 2">Binds 1 Mg(2+) ion per subunit.</text>
</comment>
<comment type="activity regulation">
    <text evidence="2">Inhibited by EDTA.</text>
</comment>
<comment type="subunit">
    <text evidence="1 2">Homodimer.</text>
</comment>
<comment type="interaction">
    <interactant intactId="EBI-16099288">
        <id>P9WJ73</id>
    </interactant>
    <interactant intactId="EBI-16099288">
        <id>P9WJ73</id>
        <label>RVBD_2179c</label>
    </interactant>
    <organismsDiffer>false</organismsDiffer>
    <experiments>3</experiments>
</comment>
<comment type="miscellaneous">
    <text>Member of the DEDD group of RNAses that are characterized by the presence of four acidic residues in the active site. These residues are conserved even when the proteins have highly divergent sequences. Has high structural similarity to RNase T despite very low sequence identity.</text>
</comment>
<proteinExistence type="evidence at protein level"/>